<comment type="function">
    <text evidence="1">Confers DNA tethering and processivity to DNA polymerases and other proteins. Acts as a clamp, forming a ring around DNA (a reaction catalyzed by the clamp-loading complex) which diffuses in an ATP-independent manner freely and bidirectionally along dsDNA. Initially characterized for its ability to contact the catalytic subunit of DNA polymerase III (Pol III), a complex, multichain enzyme responsible for most of the replicative synthesis in bacteria; Pol III exhibits 3'-5' exonuclease proofreading activity. The beta chain is required for initiation of replication as well as for processivity of DNA replication.</text>
</comment>
<comment type="subunit">
    <text evidence="1 2">Forms a ring-shaped head-to-tail homodimer (PubMed:26045430) around DNA which binds and tethers DNA polymerases and other proteins to the DNA (By similarity). The DNA replisome complex has a single clamp-loading complex (3 tau and 1 each of delta, delta', psi and chi subunits) which binds 3 Pol III cores (1 core on the leading strand and 2 on the lagging strand) each with a beta sliding clamp dimer (By similarity). Additional proteins in the replisome are other copies of gamma, psi and chi, Ssb, DNA helicase and RNA primase (By similarity).</text>
</comment>
<comment type="subcellular location">
    <subcellularLocation>
        <location evidence="1">Cytoplasm</location>
    </subcellularLocation>
</comment>
<comment type="miscellaneous">
    <text evidence="2">Strains that are resistant to griselimycin occur at a very low frequency (5 x 10(-10)) and are associated with amplification of a chromosomal segment containing this gene as well as the ori site (with a single point mutation in the promoter region), suggesting antibiotic resistance may be due to overexpression of the protein (PubMed:26045430).</text>
</comment>
<comment type="similarity">
    <text evidence="3">Belongs to the beta sliding clamp family.</text>
</comment>
<dbReference type="EMBL" id="CP000480">
    <property type="protein sequence ID" value="ABK70300.1"/>
    <property type="molecule type" value="Genomic_DNA"/>
</dbReference>
<dbReference type="EMBL" id="CP001663">
    <property type="protein sequence ID" value="AFP36488.1"/>
    <property type="molecule type" value="Genomic_DNA"/>
</dbReference>
<dbReference type="RefSeq" id="WP_011726602.1">
    <property type="nucleotide sequence ID" value="NZ_SIJM01000001.1"/>
</dbReference>
<dbReference type="RefSeq" id="YP_884424.1">
    <property type="nucleotide sequence ID" value="NC_008596.1"/>
</dbReference>
<dbReference type="PDB" id="5AH2">
    <property type="method" value="X-ray"/>
    <property type="resolution" value="2.13 A"/>
    <property type="chains" value="A/B/C/D=1-397"/>
</dbReference>
<dbReference type="PDB" id="5AH4">
    <property type="method" value="X-ray"/>
    <property type="resolution" value="2.31 A"/>
    <property type="chains" value="A/B=1-397"/>
</dbReference>
<dbReference type="PDBsum" id="5AH2"/>
<dbReference type="PDBsum" id="5AH4"/>
<dbReference type="SMR" id="A0QND6"/>
<dbReference type="DIP" id="DIP-61661N"/>
<dbReference type="IntAct" id="A0QND6">
    <property type="interactions" value="1"/>
</dbReference>
<dbReference type="STRING" id="246196.MSMEG_0001"/>
<dbReference type="PaxDb" id="246196-MSMEI_0003"/>
<dbReference type="GeneID" id="93454928"/>
<dbReference type="KEGG" id="msb:LJ00_00005"/>
<dbReference type="KEGG" id="msg:MSMEI_0003"/>
<dbReference type="KEGG" id="msm:MSMEG_0001"/>
<dbReference type="PATRIC" id="fig|246196.19.peg.1"/>
<dbReference type="eggNOG" id="COG0592">
    <property type="taxonomic scope" value="Bacteria"/>
</dbReference>
<dbReference type="OrthoDB" id="468978at2"/>
<dbReference type="EvolutionaryTrace" id="A0QND6"/>
<dbReference type="Proteomes" id="UP000000757">
    <property type="component" value="Chromosome"/>
</dbReference>
<dbReference type="Proteomes" id="UP000006158">
    <property type="component" value="Chromosome"/>
</dbReference>
<dbReference type="GO" id="GO:0005737">
    <property type="term" value="C:cytoplasm"/>
    <property type="evidence" value="ECO:0007669"/>
    <property type="project" value="UniProtKB-SubCell"/>
</dbReference>
<dbReference type="GO" id="GO:0009360">
    <property type="term" value="C:DNA polymerase III complex"/>
    <property type="evidence" value="ECO:0007669"/>
    <property type="project" value="InterPro"/>
</dbReference>
<dbReference type="GO" id="GO:0008408">
    <property type="term" value="F:3'-5' exonuclease activity"/>
    <property type="evidence" value="ECO:0007669"/>
    <property type="project" value="InterPro"/>
</dbReference>
<dbReference type="GO" id="GO:0003677">
    <property type="term" value="F:DNA binding"/>
    <property type="evidence" value="ECO:0007669"/>
    <property type="project" value="UniProtKB-KW"/>
</dbReference>
<dbReference type="GO" id="GO:0003887">
    <property type="term" value="F:DNA-directed DNA polymerase activity"/>
    <property type="evidence" value="ECO:0007669"/>
    <property type="project" value="UniProtKB-KW"/>
</dbReference>
<dbReference type="GO" id="GO:0006271">
    <property type="term" value="P:DNA strand elongation involved in DNA replication"/>
    <property type="evidence" value="ECO:0007669"/>
    <property type="project" value="TreeGrafter"/>
</dbReference>
<dbReference type="GO" id="GO:0046677">
    <property type="term" value="P:response to antibiotic"/>
    <property type="evidence" value="ECO:0007669"/>
    <property type="project" value="UniProtKB-KW"/>
</dbReference>
<dbReference type="CDD" id="cd00140">
    <property type="entry name" value="beta_clamp"/>
    <property type="match status" value="1"/>
</dbReference>
<dbReference type="FunFam" id="3.10.150.10:FF:000001">
    <property type="entry name" value="Beta sliding clamp"/>
    <property type="match status" value="1"/>
</dbReference>
<dbReference type="FunFam" id="3.10.150.10:FF:000005">
    <property type="entry name" value="Beta sliding clamp"/>
    <property type="match status" value="1"/>
</dbReference>
<dbReference type="Gene3D" id="3.10.150.10">
    <property type="entry name" value="DNA Polymerase III, subunit A, domain 2"/>
    <property type="match status" value="3"/>
</dbReference>
<dbReference type="InterPro" id="IPR046938">
    <property type="entry name" value="DNA_clamp_sf"/>
</dbReference>
<dbReference type="InterPro" id="IPR001001">
    <property type="entry name" value="DNA_polIII_beta"/>
</dbReference>
<dbReference type="InterPro" id="IPR022635">
    <property type="entry name" value="DNA_polIII_beta_C"/>
</dbReference>
<dbReference type="InterPro" id="IPR022637">
    <property type="entry name" value="DNA_polIII_beta_cen"/>
</dbReference>
<dbReference type="InterPro" id="IPR022634">
    <property type="entry name" value="DNA_polIII_beta_N"/>
</dbReference>
<dbReference type="NCBIfam" id="TIGR00663">
    <property type="entry name" value="dnan"/>
    <property type="match status" value="1"/>
</dbReference>
<dbReference type="PANTHER" id="PTHR30478:SF0">
    <property type="entry name" value="BETA SLIDING CLAMP"/>
    <property type="match status" value="1"/>
</dbReference>
<dbReference type="PANTHER" id="PTHR30478">
    <property type="entry name" value="DNA POLYMERASE III SUBUNIT BETA"/>
    <property type="match status" value="1"/>
</dbReference>
<dbReference type="Pfam" id="PF00712">
    <property type="entry name" value="DNA_pol3_beta"/>
    <property type="match status" value="1"/>
</dbReference>
<dbReference type="Pfam" id="PF02767">
    <property type="entry name" value="DNA_pol3_beta_2"/>
    <property type="match status" value="1"/>
</dbReference>
<dbReference type="Pfam" id="PF02768">
    <property type="entry name" value="DNA_pol3_beta_3"/>
    <property type="match status" value="1"/>
</dbReference>
<dbReference type="PIRSF" id="PIRSF000804">
    <property type="entry name" value="DNA_pol_III_b"/>
    <property type="match status" value="1"/>
</dbReference>
<dbReference type="SMART" id="SM00480">
    <property type="entry name" value="POL3Bc"/>
    <property type="match status" value="1"/>
</dbReference>
<dbReference type="SUPFAM" id="SSF55979">
    <property type="entry name" value="DNA clamp"/>
    <property type="match status" value="3"/>
</dbReference>
<name>DPO3B_MYCS2</name>
<accession>A0QND6</accession>
<accession>I7FC80</accession>
<organism>
    <name type="scientific">Mycolicibacterium smegmatis (strain ATCC 700084 / mc(2)155)</name>
    <name type="common">Mycobacterium smegmatis</name>
    <dbReference type="NCBI Taxonomy" id="246196"/>
    <lineage>
        <taxon>Bacteria</taxon>
        <taxon>Bacillati</taxon>
        <taxon>Actinomycetota</taxon>
        <taxon>Actinomycetes</taxon>
        <taxon>Mycobacteriales</taxon>
        <taxon>Mycobacteriaceae</taxon>
        <taxon>Mycolicibacterium</taxon>
    </lineage>
</organism>
<keyword id="KW-0002">3D-structure</keyword>
<keyword id="KW-0046">Antibiotic resistance</keyword>
<keyword id="KW-0963">Cytoplasm</keyword>
<keyword id="KW-0235">DNA replication</keyword>
<keyword id="KW-0238">DNA-binding</keyword>
<keyword id="KW-0239">DNA-directed DNA polymerase</keyword>
<keyword id="KW-0548">Nucleotidyltransferase</keyword>
<keyword id="KW-1185">Reference proteome</keyword>
<keyword id="KW-0808">Transferase</keyword>
<sequence>MATTTAGLTDLKFRVVREDFADAVAWVARSLPTRPTIPVLAGVLLTGTDEGLTISGFDYEVSAEVKVSAEIASAGSVLVSGRLLSDITKALPAKPVEVSVEGTRVSLTCGSARFSLPTLAVEDYPALPALPEETGVIASDLFAEAIGQVAVAAGRDDTLPMLTGIRVEISGESVVLAATDRFRLAVRELTWVTTAGDVEAAVLVPAKTLAEAAKAGTDGNQVHLALGSGASVGKDGLLGIRSEGKRSTTRLLDAEFPKFRQLLPAEHTAVATIGVAELTEAIKRVALVADRGAQIRMEFSDDTLKLSAGADDVGRAEEDLPVDFAGEPLTIAFNPTYLTDGLGSLHSERVTFGFTTPSRPAVLRPAGEDDGANGGSGPFPAAKTDYVYLLMPVRLPG</sequence>
<gene>
    <name type="primary">dnaN</name>
    <name type="ordered locus">MSMEG_0001</name>
    <name type="ordered locus">MSMEI_0003</name>
</gene>
<proteinExistence type="evidence at protein level"/>
<evidence type="ECO:0000250" key="1">
    <source>
        <dbReference type="UniProtKB" id="P0A988"/>
    </source>
</evidence>
<evidence type="ECO:0000269" key="2">
    <source>
    </source>
</evidence>
<evidence type="ECO:0000305" key="3"/>
<evidence type="ECO:0007744" key="4">
    <source>
        <dbReference type="PDB" id="5AH2"/>
    </source>
</evidence>
<evidence type="ECO:0007744" key="5">
    <source>
        <dbReference type="PDB" id="5AH4"/>
    </source>
</evidence>
<evidence type="ECO:0007829" key="6">
    <source>
        <dbReference type="PDB" id="5AH2"/>
    </source>
</evidence>
<evidence type="ECO:0007829" key="7">
    <source>
        <dbReference type="PDB" id="5AH4"/>
    </source>
</evidence>
<feature type="chain" id="PRO_0000441110" description="Beta sliding clamp">
    <location>
        <begin position="1"/>
        <end position="397"/>
    </location>
</feature>
<feature type="strand" evidence="6">
    <location>
        <begin position="12"/>
        <end position="15"/>
    </location>
</feature>
<feature type="helix" evidence="6">
    <location>
        <begin position="17"/>
        <end position="28"/>
    </location>
</feature>
<feature type="helix" evidence="6">
    <location>
        <begin position="38"/>
        <end position="41"/>
    </location>
</feature>
<feature type="strand" evidence="6">
    <location>
        <begin position="42"/>
        <end position="47"/>
    </location>
</feature>
<feature type="strand" evidence="6">
    <location>
        <begin position="52"/>
        <end position="57"/>
    </location>
</feature>
<feature type="strand" evidence="6">
    <location>
        <begin position="59"/>
        <end position="67"/>
    </location>
</feature>
<feature type="strand" evidence="6">
    <location>
        <begin position="70"/>
        <end position="73"/>
    </location>
</feature>
<feature type="strand" evidence="6">
    <location>
        <begin position="75"/>
        <end position="80"/>
    </location>
</feature>
<feature type="helix" evidence="6">
    <location>
        <begin position="81"/>
        <end position="90"/>
    </location>
</feature>
<feature type="strand" evidence="6">
    <location>
        <begin position="96"/>
        <end position="101"/>
    </location>
</feature>
<feature type="strand" evidence="6">
    <location>
        <begin position="104"/>
        <end position="109"/>
    </location>
</feature>
<feature type="strand" evidence="6">
    <location>
        <begin position="112"/>
        <end position="117"/>
    </location>
</feature>
<feature type="helix" evidence="7">
    <location>
        <begin position="121"/>
        <end position="123"/>
    </location>
</feature>
<feature type="strand" evidence="6">
    <location>
        <begin position="133"/>
        <end position="138"/>
    </location>
</feature>
<feature type="helix" evidence="6">
    <location>
        <begin position="139"/>
        <end position="150"/>
    </location>
</feature>
<feature type="helix" evidence="6">
    <location>
        <begin position="160"/>
        <end position="163"/>
    </location>
</feature>
<feature type="strand" evidence="6">
    <location>
        <begin position="164"/>
        <end position="170"/>
    </location>
</feature>
<feature type="strand" evidence="6">
    <location>
        <begin position="173"/>
        <end position="179"/>
    </location>
</feature>
<feature type="strand" evidence="6">
    <location>
        <begin position="181"/>
        <end position="190"/>
    </location>
</feature>
<feature type="strand" evidence="6">
    <location>
        <begin position="192"/>
        <end position="195"/>
    </location>
</feature>
<feature type="strand" evidence="6">
    <location>
        <begin position="199"/>
        <end position="205"/>
    </location>
</feature>
<feature type="helix" evidence="6">
    <location>
        <begin position="206"/>
        <end position="215"/>
    </location>
</feature>
<feature type="strand" evidence="6">
    <location>
        <begin position="218"/>
        <end position="225"/>
    </location>
</feature>
<feature type="helix" evidence="6">
    <location>
        <begin position="229"/>
        <end position="231"/>
    </location>
</feature>
<feature type="turn" evidence="6">
    <location>
        <begin position="232"/>
        <end position="235"/>
    </location>
</feature>
<feature type="strand" evidence="6">
    <location>
        <begin position="236"/>
        <end position="242"/>
    </location>
</feature>
<feature type="strand" evidence="6">
    <location>
        <begin position="245"/>
        <end position="250"/>
    </location>
</feature>
<feature type="helix" evidence="6">
    <location>
        <begin position="259"/>
        <end position="262"/>
    </location>
</feature>
<feature type="strand" evidence="6">
    <location>
        <begin position="265"/>
        <end position="274"/>
    </location>
</feature>
<feature type="helix" evidence="6">
    <location>
        <begin position="275"/>
        <end position="285"/>
    </location>
</feature>
<feature type="helix" evidence="6">
    <location>
        <begin position="286"/>
        <end position="288"/>
    </location>
</feature>
<feature type="helix" evidence="6">
    <location>
        <begin position="290"/>
        <end position="292"/>
    </location>
</feature>
<feature type="strand" evidence="6">
    <location>
        <begin position="295"/>
        <end position="300"/>
    </location>
</feature>
<feature type="strand" evidence="6">
    <location>
        <begin position="303"/>
        <end position="310"/>
    </location>
</feature>
<feature type="turn" evidence="6">
    <location>
        <begin position="311"/>
        <end position="313"/>
    </location>
</feature>
<feature type="strand" evidence="6">
    <location>
        <begin position="314"/>
        <end position="321"/>
    </location>
</feature>
<feature type="strand" evidence="6">
    <location>
        <begin position="323"/>
        <end position="327"/>
    </location>
</feature>
<feature type="strand" evidence="6">
    <location>
        <begin position="329"/>
        <end position="333"/>
    </location>
</feature>
<feature type="helix" evidence="6">
    <location>
        <begin position="335"/>
        <end position="345"/>
    </location>
</feature>
<feature type="strand" evidence="6">
    <location>
        <begin position="347"/>
        <end position="356"/>
    </location>
</feature>
<feature type="strand" evidence="6">
    <location>
        <begin position="361"/>
        <end position="365"/>
    </location>
</feature>
<feature type="strand" evidence="6">
    <location>
        <begin position="385"/>
        <end position="390"/>
    </location>
</feature>
<reference key="1">
    <citation type="submission" date="2006-10" db="EMBL/GenBank/DDBJ databases">
        <authorList>
            <person name="Fleischmann R.D."/>
            <person name="Dodson R.J."/>
            <person name="Haft D.H."/>
            <person name="Merkel J.S."/>
            <person name="Nelson W.C."/>
            <person name="Fraser C.M."/>
        </authorList>
    </citation>
    <scope>NUCLEOTIDE SEQUENCE [LARGE SCALE GENOMIC DNA]</scope>
    <source>
        <strain>ATCC 700084 / mc(2)155</strain>
    </source>
</reference>
<reference key="2">
    <citation type="journal article" date="2007" name="Genome Biol.">
        <title>Interrupted coding sequences in Mycobacterium smegmatis: authentic mutations or sequencing errors?</title>
        <authorList>
            <person name="Deshayes C."/>
            <person name="Perrodou E."/>
            <person name="Gallien S."/>
            <person name="Euphrasie D."/>
            <person name="Schaeffer C."/>
            <person name="Van-Dorsselaer A."/>
            <person name="Poch O."/>
            <person name="Lecompte O."/>
            <person name="Reyrat J.-M."/>
        </authorList>
    </citation>
    <scope>NUCLEOTIDE SEQUENCE [LARGE SCALE GENOMIC DNA]</scope>
    <source>
        <strain>ATCC 700084 / mc(2)155</strain>
    </source>
</reference>
<reference key="3">
    <citation type="journal article" date="2009" name="Genome Res.">
        <title>Ortho-proteogenomics: multiple proteomes investigation through orthology and a new MS-based protocol.</title>
        <authorList>
            <person name="Gallien S."/>
            <person name="Perrodou E."/>
            <person name="Carapito C."/>
            <person name="Deshayes C."/>
            <person name="Reyrat J.-M."/>
            <person name="Van Dorsselaer A."/>
            <person name="Poch O."/>
            <person name="Schaeffer C."/>
            <person name="Lecompte O."/>
        </authorList>
    </citation>
    <scope>NUCLEOTIDE SEQUENCE [LARGE SCALE GENOMIC DNA]</scope>
    <source>
        <strain>ATCC 700084 / mc(2)155</strain>
    </source>
</reference>
<reference evidence="4 5" key="4">
    <citation type="journal article" date="2015" name="Science">
        <title>Targeting DnaN for tuberculosis therapy using novel griselimycins.</title>
        <authorList>
            <person name="Kling A."/>
            <person name="Lukat P."/>
            <person name="Almeida D.V."/>
            <person name="Bauer A."/>
            <person name="Fontaine E."/>
            <person name="Sordello S."/>
            <person name="Zaburannyi N."/>
            <person name="Herrmann J."/>
            <person name="Wenzel S.C."/>
            <person name="Konig C."/>
            <person name="Ammerman N.C."/>
            <person name="Barrio M.B."/>
            <person name="Borchers K."/>
            <person name="Bordon-Pallier F."/>
            <person name="Bronstrup M."/>
            <person name="Courtemanche G."/>
            <person name="Gerlitz M."/>
            <person name="Geslin M."/>
            <person name="Hammann P."/>
            <person name="Heinz D.W."/>
            <person name="Hoffmann H."/>
            <person name="Klieber S."/>
            <person name="Kohlmann M."/>
            <person name="Kurz M."/>
            <person name="Lair C."/>
            <person name="Matter H."/>
            <person name="Nuermberger E."/>
            <person name="Tyagi S."/>
            <person name="Fraisse L."/>
            <person name="Grosset J.H."/>
            <person name="Lagrange S."/>
            <person name="Muller R."/>
        </authorList>
    </citation>
    <scope>X-RAY CRYSTALLOGRAPHY (2.13 ANGSTROMS) IN COMPLEX WITH ANTIBIOTICS</scope>
    <scope>SUBUNIT</scope>
    <scope>ANTIBIOTIC-BINDING</scope>
    <source>
        <strain>ATCC 700084 / mc(2)155</strain>
    </source>
</reference>
<protein>
    <recommendedName>
        <fullName>Beta sliding clamp</fullName>
        <shortName>Beta clamp</shortName>
        <shortName>Sliding clamp</shortName>
    </recommendedName>
    <alternativeName>
        <fullName>Beta-clamp processivity factor</fullName>
    </alternativeName>
    <alternativeName>
        <fullName>DNA polymerase III beta sliding clamp subunit</fullName>
    </alternativeName>
    <alternativeName>
        <fullName>DNA polymerase III subunit beta</fullName>
    </alternativeName>
</protein>